<sequence>MWQIVFLTFGCDLVLASAYNNFRKSVDSTGRRQYQVQNGPCSYTFLLPETDSCRSSSSPYMSNAVQRDAPLDYDDSVQRLQVLENILENNTQWLMKLENYIQDNMKKEMVEIQQNVVQNQTAVMIEIGTSLLNQTAAQTRKLTDVEAQVLNQTTRLELQLLQHSISTNKLEKQILDQTSEINKLQDKNSFLEKKVLDMEDKHSVQLQSMKEQKDQLQVLVSKQSSVIDELEKKLVTATVNNSVLQKQQHDLMETVNSLLTMMSSPDYKSSVAVPKEEKTTFRDCAEIFKSGLTTSGIYTLTFPNSTEEVKAYCDMDMGGGGWTVIQHREDGSVDFQRTWKEYKEGFGSPLGEYWLGNEFVSQLTSGHRYVLKIQLKDWEGSEAHSLYEHFYLSGEESNYRIHLTGLTGTAGKISSISQPGSDFSTKDSDNDKCICKCSQMLTGGWWFDACGPSNLNGQYYPQKQNTNKFNGIKWYYWKGSGYSLKATTMMIRPADF</sequence>
<keyword id="KW-0037">Angiogenesis</keyword>
<keyword id="KW-0106">Calcium</keyword>
<keyword id="KW-0175">Coiled coil</keyword>
<keyword id="KW-0217">Developmental protein</keyword>
<keyword id="KW-0221">Differentiation</keyword>
<keyword id="KW-1015">Disulfide bond</keyword>
<keyword id="KW-0325">Glycoprotein</keyword>
<keyword id="KW-0479">Metal-binding</keyword>
<keyword id="KW-1185">Reference proteome</keyword>
<keyword id="KW-0964">Secreted</keyword>
<keyword id="KW-0732">Signal</keyword>
<reference key="1">
    <citation type="submission" date="2005-07" db="EMBL/GenBank/DDBJ databases">
        <authorList>
            <person name="Mural R.J."/>
            <person name="Adams M.D."/>
            <person name="Myers E.W."/>
            <person name="Smith H.O."/>
            <person name="Venter J.C."/>
        </authorList>
    </citation>
    <scope>NUCLEOTIDE SEQUENCE [LARGE SCALE GENOMIC DNA]</scope>
</reference>
<reference key="2">
    <citation type="journal article" date="2004" name="Genome Res.">
        <title>The status, quality, and expansion of the NIH full-length cDNA project: the Mammalian Gene Collection (MGC).</title>
        <authorList>
            <consortium name="The MGC Project Team"/>
        </authorList>
    </citation>
    <scope>NUCLEOTIDE SEQUENCE [LARGE SCALE MRNA]</scope>
    <source>
        <tissue>Kidney</tissue>
    </source>
</reference>
<reference key="3">
    <citation type="journal article" date="1998" name="Circ. Res.">
        <title>Regulation of angiopoietin-2 mRNA levels in bovine microvascular endothelial cells by cytokines and hypoxia.</title>
        <authorList>
            <person name="Mandriota S.J."/>
            <person name="Pepper M.S."/>
        </authorList>
    </citation>
    <scope>NUCLEOTIDE SEQUENCE [MRNA] OF 340-476</scope>
    <source>
        <strain>Sprague-Dawley</strain>
        <tissue>Heart</tissue>
        <tissue>Placenta</tissue>
    </source>
</reference>
<dbReference type="EMBL" id="CH473970">
    <property type="protein sequence ID" value="EDM08957.1"/>
    <property type="molecule type" value="Genomic_DNA"/>
</dbReference>
<dbReference type="EMBL" id="BC161931">
    <property type="protein sequence ID" value="AAI61931.1"/>
    <property type="molecule type" value="mRNA"/>
</dbReference>
<dbReference type="EMBL" id="AF030378">
    <property type="protein sequence ID" value="AAC78247.1"/>
    <property type="molecule type" value="mRNA"/>
</dbReference>
<dbReference type="EMBL" id="AF311728">
    <property type="protein sequence ID" value="AAG34114.1"/>
    <property type="molecule type" value="mRNA"/>
</dbReference>
<dbReference type="RefSeq" id="NP_604449.1">
    <property type="nucleotide sequence ID" value="NM_134454.1"/>
</dbReference>
<dbReference type="SMR" id="O35462"/>
<dbReference type="FunCoup" id="O35462">
    <property type="interactions" value="467"/>
</dbReference>
<dbReference type="STRING" id="10116.ENSRNOP00000022774"/>
<dbReference type="GlyCosmos" id="O35462">
    <property type="glycosylation" value="6 sites, No reported glycans"/>
</dbReference>
<dbReference type="GlyGen" id="O35462">
    <property type="glycosylation" value="6 sites"/>
</dbReference>
<dbReference type="iPTMnet" id="O35462"/>
<dbReference type="PhosphoSitePlus" id="O35462"/>
<dbReference type="PaxDb" id="10116-ENSRNOP00000022774"/>
<dbReference type="Ensembl" id="ENSRNOT00000022774.7">
    <property type="protein sequence ID" value="ENSRNOP00000022774.3"/>
    <property type="gene ID" value="ENSRNOG00000016696.7"/>
</dbReference>
<dbReference type="GeneID" id="89805"/>
<dbReference type="KEGG" id="rno:89805"/>
<dbReference type="UCSC" id="RGD:621861">
    <property type="organism name" value="rat"/>
</dbReference>
<dbReference type="AGR" id="RGD:621861"/>
<dbReference type="CTD" id="285"/>
<dbReference type="RGD" id="621861">
    <property type="gene designation" value="Angpt2"/>
</dbReference>
<dbReference type="eggNOG" id="KOG2579">
    <property type="taxonomic scope" value="Eukaryota"/>
</dbReference>
<dbReference type="GeneTree" id="ENSGT00940000158430"/>
<dbReference type="HOGENOM" id="CLU_038628_3_1_1"/>
<dbReference type="InParanoid" id="O35462"/>
<dbReference type="OMA" id="YYWKGAG"/>
<dbReference type="OrthoDB" id="7735366at2759"/>
<dbReference type="PhylomeDB" id="O35462"/>
<dbReference type="TreeFam" id="TF336658"/>
<dbReference type="Reactome" id="R-RNO-210993">
    <property type="pathway name" value="Tie2 Signaling"/>
</dbReference>
<dbReference type="PRO" id="PR:O35462"/>
<dbReference type="Proteomes" id="UP000002494">
    <property type="component" value="Chromosome 16"/>
</dbReference>
<dbReference type="Proteomes" id="UP000234681">
    <property type="component" value="Chromosome 16"/>
</dbReference>
<dbReference type="Bgee" id="ENSRNOG00000016696">
    <property type="expression patterns" value="Expressed in quadriceps femoris and 19 other cell types or tissues"/>
</dbReference>
<dbReference type="GO" id="GO:0042995">
    <property type="term" value="C:cell projection"/>
    <property type="evidence" value="ECO:0000314"/>
    <property type="project" value="RGD"/>
</dbReference>
<dbReference type="GO" id="GO:0062023">
    <property type="term" value="C:collagen-containing extracellular matrix"/>
    <property type="evidence" value="ECO:0000318"/>
    <property type="project" value="GO_Central"/>
</dbReference>
<dbReference type="GO" id="GO:0005615">
    <property type="term" value="C:extracellular space"/>
    <property type="evidence" value="ECO:0000314"/>
    <property type="project" value="RGD"/>
</dbReference>
<dbReference type="GO" id="GO:0046872">
    <property type="term" value="F:metal ion binding"/>
    <property type="evidence" value="ECO:0007669"/>
    <property type="project" value="UniProtKB-KW"/>
</dbReference>
<dbReference type="GO" id="GO:0048018">
    <property type="term" value="F:receptor ligand activity"/>
    <property type="evidence" value="ECO:0000266"/>
    <property type="project" value="RGD"/>
</dbReference>
<dbReference type="GO" id="GO:0030971">
    <property type="term" value="F:receptor tyrosine kinase binding"/>
    <property type="evidence" value="ECO:0000266"/>
    <property type="project" value="RGD"/>
</dbReference>
<dbReference type="GO" id="GO:0001525">
    <property type="term" value="P:angiogenesis"/>
    <property type="evidence" value="ECO:0000270"/>
    <property type="project" value="RGD"/>
</dbReference>
<dbReference type="GO" id="GO:0031100">
    <property type="term" value="P:animal organ regeneration"/>
    <property type="evidence" value="ECO:0000270"/>
    <property type="project" value="RGD"/>
</dbReference>
<dbReference type="GO" id="GO:0007596">
    <property type="term" value="P:blood coagulation"/>
    <property type="evidence" value="ECO:0007669"/>
    <property type="project" value="InterPro"/>
</dbReference>
<dbReference type="GO" id="GO:0048514">
    <property type="term" value="P:blood vessel morphogenesis"/>
    <property type="evidence" value="ECO:0000266"/>
    <property type="project" value="RGD"/>
</dbReference>
<dbReference type="GO" id="GO:0071363">
    <property type="term" value="P:cellular response to growth factor stimulus"/>
    <property type="evidence" value="ECO:0000270"/>
    <property type="project" value="RGD"/>
</dbReference>
<dbReference type="GO" id="GO:0010467">
    <property type="term" value="P:gene expression"/>
    <property type="evidence" value="ECO:0000266"/>
    <property type="project" value="RGD"/>
</dbReference>
<dbReference type="GO" id="GO:0007281">
    <property type="term" value="P:germ cell development"/>
    <property type="evidence" value="ECO:0000270"/>
    <property type="project" value="RGD"/>
</dbReference>
<dbReference type="GO" id="GO:0072012">
    <property type="term" value="P:glomerulus vasculature development"/>
    <property type="evidence" value="ECO:0000315"/>
    <property type="project" value="UniProtKB"/>
</dbReference>
<dbReference type="GO" id="GO:0060135">
    <property type="term" value="P:maternal process involved in female pregnancy"/>
    <property type="evidence" value="ECO:0000270"/>
    <property type="project" value="RGD"/>
</dbReference>
<dbReference type="GO" id="GO:0016525">
    <property type="term" value="P:negative regulation of angiogenesis"/>
    <property type="evidence" value="ECO:0000266"/>
    <property type="project" value="RGD"/>
</dbReference>
<dbReference type="GO" id="GO:0043537">
    <property type="term" value="P:negative regulation of blood vessel endothelial cell migration"/>
    <property type="evidence" value="ECO:0000266"/>
    <property type="project" value="RGD"/>
</dbReference>
<dbReference type="GO" id="GO:0010812">
    <property type="term" value="P:negative regulation of cell-substrate adhesion"/>
    <property type="evidence" value="ECO:0000266"/>
    <property type="project" value="RGD"/>
</dbReference>
<dbReference type="GO" id="GO:0050928">
    <property type="term" value="P:negative regulation of positive chemotaxis"/>
    <property type="evidence" value="ECO:0000266"/>
    <property type="project" value="RGD"/>
</dbReference>
<dbReference type="GO" id="GO:0045766">
    <property type="term" value="P:positive regulation of angiogenesis"/>
    <property type="evidence" value="ECO:0000315"/>
    <property type="project" value="RGD"/>
</dbReference>
<dbReference type="GO" id="GO:0050820">
    <property type="term" value="P:positive regulation of coagulation"/>
    <property type="evidence" value="ECO:0000266"/>
    <property type="project" value="RGD"/>
</dbReference>
<dbReference type="GO" id="GO:0014823">
    <property type="term" value="P:response to activity"/>
    <property type="evidence" value="ECO:0000270"/>
    <property type="project" value="RGD"/>
</dbReference>
<dbReference type="GO" id="GO:0009749">
    <property type="term" value="P:response to glucose"/>
    <property type="evidence" value="ECO:0000270"/>
    <property type="project" value="RGD"/>
</dbReference>
<dbReference type="GO" id="GO:0001666">
    <property type="term" value="P:response to hypoxia"/>
    <property type="evidence" value="ECO:0000270"/>
    <property type="project" value="RGD"/>
</dbReference>
<dbReference type="GO" id="GO:0009612">
    <property type="term" value="P:response to mechanical stimulus"/>
    <property type="evidence" value="ECO:0000270"/>
    <property type="project" value="RGD"/>
</dbReference>
<dbReference type="GO" id="GO:0048014">
    <property type="term" value="P:Tie signaling pathway"/>
    <property type="evidence" value="ECO:0000266"/>
    <property type="project" value="RGD"/>
</dbReference>
<dbReference type="CDD" id="cd00087">
    <property type="entry name" value="FReD"/>
    <property type="match status" value="1"/>
</dbReference>
<dbReference type="FunFam" id="4.10.530.10:FF:000001">
    <property type="entry name" value="angiopoietin-2 isoform X1"/>
    <property type="match status" value="1"/>
</dbReference>
<dbReference type="FunFam" id="3.90.215.10:FF:000001">
    <property type="entry name" value="Tenascin isoform 1"/>
    <property type="match status" value="1"/>
</dbReference>
<dbReference type="Gene3D" id="3.90.215.10">
    <property type="entry name" value="Gamma Fibrinogen, chain A, domain 1"/>
    <property type="match status" value="1"/>
</dbReference>
<dbReference type="Gene3D" id="4.10.530.10">
    <property type="entry name" value="Gamma-fibrinogen Carboxyl Terminal Fragment, domain 2"/>
    <property type="match status" value="1"/>
</dbReference>
<dbReference type="InterPro" id="IPR037579">
    <property type="entry name" value="FIB_ANG-like"/>
</dbReference>
<dbReference type="InterPro" id="IPR036056">
    <property type="entry name" value="Fibrinogen-like_C"/>
</dbReference>
<dbReference type="InterPro" id="IPR014716">
    <property type="entry name" value="Fibrinogen_a/b/g_C_1"/>
</dbReference>
<dbReference type="InterPro" id="IPR002181">
    <property type="entry name" value="Fibrinogen_a/b/g_C_dom"/>
</dbReference>
<dbReference type="InterPro" id="IPR020837">
    <property type="entry name" value="Fibrinogen_CS"/>
</dbReference>
<dbReference type="NCBIfam" id="NF040941">
    <property type="entry name" value="GGGWT_bact"/>
    <property type="match status" value="1"/>
</dbReference>
<dbReference type="PANTHER" id="PTHR47221">
    <property type="entry name" value="FIBRINOGEN ALPHA CHAIN"/>
    <property type="match status" value="1"/>
</dbReference>
<dbReference type="PANTHER" id="PTHR47221:SF6">
    <property type="entry name" value="FIBRINOGEN ALPHA CHAIN"/>
    <property type="match status" value="1"/>
</dbReference>
<dbReference type="Pfam" id="PF25443">
    <property type="entry name" value="ANG-1"/>
    <property type="match status" value="1"/>
</dbReference>
<dbReference type="Pfam" id="PF00147">
    <property type="entry name" value="Fibrinogen_C"/>
    <property type="match status" value="1"/>
</dbReference>
<dbReference type="SMART" id="SM00186">
    <property type="entry name" value="FBG"/>
    <property type="match status" value="1"/>
</dbReference>
<dbReference type="SUPFAM" id="SSF56496">
    <property type="entry name" value="Fibrinogen C-terminal domain-like"/>
    <property type="match status" value="1"/>
</dbReference>
<dbReference type="PROSITE" id="PS00514">
    <property type="entry name" value="FIBRINOGEN_C_1"/>
    <property type="match status" value="1"/>
</dbReference>
<dbReference type="PROSITE" id="PS51406">
    <property type="entry name" value="FIBRINOGEN_C_2"/>
    <property type="match status" value="1"/>
</dbReference>
<protein>
    <recommendedName>
        <fullName>Angiopoietin-2</fullName>
        <shortName>ANG-2</shortName>
    </recommendedName>
</protein>
<feature type="signal peptide" evidence="4">
    <location>
        <begin position="1"/>
        <end position="18"/>
    </location>
</feature>
<feature type="chain" id="PRO_0000099064" description="Angiopoietin-2">
    <location>
        <begin position="19"/>
        <end position="496"/>
    </location>
</feature>
<feature type="domain" description="Fibrinogen C-terminal" evidence="5">
    <location>
        <begin position="280"/>
        <end position="496"/>
    </location>
</feature>
<feature type="coiled-coil region" evidence="4">
    <location>
        <begin position="159"/>
        <end position="256"/>
    </location>
</feature>
<feature type="binding site" evidence="2">
    <location>
        <position position="429"/>
    </location>
    <ligand>
        <name>Ca(2+)</name>
        <dbReference type="ChEBI" id="CHEBI:29108"/>
    </ligand>
</feature>
<feature type="binding site" evidence="2">
    <location>
        <position position="431"/>
    </location>
    <ligand>
        <name>Ca(2+)</name>
        <dbReference type="ChEBI" id="CHEBI:29108"/>
    </ligand>
</feature>
<feature type="binding site" evidence="2">
    <location>
        <position position="433"/>
    </location>
    <ligand>
        <name>Ca(2+)</name>
        <dbReference type="ChEBI" id="CHEBI:29108"/>
    </ligand>
</feature>
<feature type="binding site" evidence="2">
    <location>
        <position position="435"/>
    </location>
    <ligand>
        <name>Ca(2+)</name>
        <dbReference type="ChEBI" id="CHEBI:29108"/>
    </ligand>
</feature>
<feature type="glycosylation site" description="N-linked (GlcNAc...) asparagine" evidence="4">
    <location>
        <position position="89"/>
    </location>
</feature>
<feature type="glycosylation site" description="N-linked (GlcNAc...) asparagine" evidence="4">
    <location>
        <position position="119"/>
    </location>
</feature>
<feature type="glycosylation site" description="N-linked (GlcNAc...) asparagine" evidence="4">
    <location>
        <position position="133"/>
    </location>
</feature>
<feature type="glycosylation site" description="N-linked (GlcNAc...) asparagine" evidence="4">
    <location>
        <position position="151"/>
    </location>
</feature>
<feature type="glycosylation site" description="N-linked (GlcNAc...) asparagine" evidence="4">
    <location>
        <position position="240"/>
    </location>
</feature>
<feature type="glycosylation site" description="N-linked (GlcNAc...) asparagine" evidence="4">
    <location>
        <position position="304"/>
    </location>
</feature>
<feature type="disulfide bond" evidence="5">
    <location>
        <begin position="284"/>
        <end position="313"/>
    </location>
</feature>
<feature type="disulfide bond" evidence="5">
    <location>
        <begin position="433"/>
        <end position="435"/>
    </location>
</feature>
<feature type="disulfide bond" evidence="5">
    <location>
        <begin position="437"/>
        <end position="450"/>
    </location>
</feature>
<gene>
    <name type="primary">Angpt2</name>
    <name type="synonym">Agpt2</name>
</gene>
<proteinExistence type="evidence at transcript level"/>
<comment type="function">
    <text evidence="2">Binds to TEK/TIE2, competing for the ANGPT1 binding site, and modulating ANGPT1 signaling (By similarity). Can induce tyrosine phosphorylation of TEK/TIE2 in the absence of ANGPT1. In the absence of angiogenic inducers, such as VEGF, ANGPT2-mediated loosening of cell-matrix contacts may induce endothelial cell apoptosis with consequent vascular regression (By similarity). In concert with VEGF, it may facilitate endothelial cell migration and proliferation, thus serving as a permissive angiogenic signal (By similarity). Involved in the regulation of lymphangiogenesis (By similarity).</text>
</comment>
<comment type="subunit">
    <text evidence="2 3">Interacts with TEK/TIE2, competing for the same binding site as ANGPT1 (By similarity). Interacts with ITGA5 (By similarity). Interacts with SVEP1/polydom (By similarity). Interacts with THBD; this interaction significantly inhibits the generation of activated PC and TAFIa/CPB2 by the thrombin/thrombomodulin complex (By similarity).</text>
</comment>
<comment type="subcellular location">
    <subcellularLocation>
        <location evidence="2">Secreted</location>
    </subcellularLocation>
</comment>
<comment type="domain">
    <text evidence="1">The Fibrinogen C-terminal domain mediates interaction with the TEK/TIE2 receptor.</text>
</comment>
<organism>
    <name type="scientific">Rattus norvegicus</name>
    <name type="common">Rat</name>
    <dbReference type="NCBI Taxonomy" id="10116"/>
    <lineage>
        <taxon>Eukaryota</taxon>
        <taxon>Metazoa</taxon>
        <taxon>Chordata</taxon>
        <taxon>Craniata</taxon>
        <taxon>Vertebrata</taxon>
        <taxon>Euteleostomi</taxon>
        <taxon>Mammalia</taxon>
        <taxon>Eutheria</taxon>
        <taxon>Euarchontoglires</taxon>
        <taxon>Glires</taxon>
        <taxon>Rodentia</taxon>
        <taxon>Myomorpha</taxon>
        <taxon>Muroidea</taxon>
        <taxon>Muridae</taxon>
        <taxon>Murinae</taxon>
        <taxon>Rattus</taxon>
    </lineage>
</organism>
<accession>O35462</accession>
<accession>B1WBY0</accession>
<accession>Q548N5</accession>
<name>ANGP2_RAT</name>
<evidence type="ECO:0000250" key="1"/>
<evidence type="ECO:0000250" key="2">
    <source>
        <dbReference type="UniProtKB" id="O15123"/>
    </source>
</evidence>
<evidence type="ECO:0000250" key="3">
    <source>
        <dbReference type="UniProtKB" id="O35608"/>
    </source>
</evidence>
<evidence type="ECO:0000255" key="4"/>
<evidence type="ECO:0000255" key="5">
    <source>
        <dbReference type="PROSITE-ProRule" id="PRU00739"/>
    </source>
</evidence>